<proteinExistence type="evidence at transcript level"/>
<organism>
    <name type="scientific">Arabidopsis thaliana</name>
    <name type="common">Mouse-ear cress</name>
    <dbReference type="NCBI Taxonomy" id="3702"/>
    <lineage>
        <taxon>Eukaryota</taxon>
        <taxon>Viridiplantae</taxon>
        <taxon>Streptophyta</taxon>
        <taxon>Embryophyta</taxon>
        <taxon>Tracheophyta</taxon>
        <taxon>Spermatophyta</taxon>
        <taxon>Magnoliopsida</taxon>
        <taxon>eudicotyledons</taxon>
        <taxon>Gunneridae</taxon>
        <taxon>Pentapetalae</taxon>
        <taxon>rosids</taxon>
        <taxon>malvids</taxon>
        <taxon>Brassicales</taxon>
        <taxon>Brassicaceae</taxon>
        <taxon>Camelineae</taxon>
        <taxon>Arabidopsis</taxon>
    </lineage>
</organism>
<comment type="catalytic activity">
    <reaction>
        <text>Eliminative cleavage of (1-&gt;4)-alpha-D-galacturonan to give oligosaccharides with 4-deoxy-alpha-D-galact-4-enuronosyl groups at their non-reducing ends.</text>
        <dbReference type="EC" id="4.2.2.2"/>
    </reaction>
</comment>
<comment type="cofactor">
    <cofactor evidence="1">
        <name>Ca(2+)</name>
        <dbReference type="ChEBI" id="CHEBI:29108"/>
    </cofactor>
    <text evidence="1">Binds 1 Ca(2+) ion. Required for its activity.</text>
</comment>
<comment type="pathway">
    <text>Glycan metabolism; pectin degradation; 2-dehydro-3-deoxy-D-gluconate from pectin: step 2/5.</text>
</comment>
<comment type="similarity">
    <text evidence="3">Belongs to the polysaccharide lyase 1 family.</text>
</comment>
<evidence type="ECO:0000250" key="1"/>
<evidence type="ECO:0000255" key="2"/>
<evidence type="ECO:0000305" key="3"/>
<name>PLY16_ARATH</name>
<feature type="signal peptide" evidence="2">
    <location>
        <begin position="1"/>
        <end position="22"/>
    </location>
</feature>
<feature type="chain" id="PRO_0000024881" description="Probable pectate lyase 16">
    <location>
        <begin position="23"/>
        <end position="394"/>
    </location>
</feature>
<feature type="active site" evidence="2">
    <location>
        <position position="272"/>
    </location>
</feature>
<feature type="binding site" evidence="1">
    <location>
        <position position="192"/>
    </location>
    <ligand>
        <name>Ca(2+)</name>
        <dbReference type="ChEBI" id="CHEBI:29108"/>
    </ligand>
</feature>
<feature type="binding site" evidence="1">
    <location>
        <position position="216"/>
    </location>
    <ligand>
        <name>Ca(2+)</name>
        <dbReference type="ChEBI" id="CHEBI:29108"/>
    </ligand>
</feature>
<feature type="binding site" evidence="1">
    <location>
        <position position="220"/>
    </location>
    <ligand>
        <name>Ca(2+)</name>
        <dbReference type="ChEBI" id="CHEBI:29108"/>
    </ligand>
</feature>
<protein>
    <recommendedName>
        <fullName>Probable pectate lyase 16</fullName>
        <ecNumber>4.2.2.2</ecNumber>
    </recommendedName>
</protein>
<dbReference type="EC" id="4.2.2.2"/>
<dbReference type="EMBL" id="AL022140">
    <property type="protein sequence ID" value="CAA18111.1"/>
    <property type="molecule type" value="Genomic_DNA"/>
</dbReference>
<dbReference type="EMBL" id="AL161556">
    <property type="protein sequence ID" value="CAB79163.1"/>
    <property type="molecule type" value="Genomic_DNA"/>
</dbReference>
<dbReference type="EMBL" id="CP002687">
    <property type="protein sequence ID" value="AEE84547.1"/>
    <property type="molecule type" value="Genomic_DNA"/>
</dbReference>
<dbReference type="EMBL" id="BX826855">
    <property type="status" value="NOT_ANNOTATED_CDS"/>
    <property type="molecule type" value="mRNA"/>
</dbReference>
<dbReference type="PIR" id="T49115">
    <property type="entry name" value="T49115"/>
</dbReference>
<dbReference type="RefSeq" id="NP_193939.1">
    <property type="nucleotide sequence ID" value="NM_118329.4"/>
</dbReference>
<dbReference type="SMR" id="O65456"/>
<dbReference type="BioGRID" id="13586">
    <property type="interactions" value="1"/>
</dbReference>
<dbReference type="FunCoup" id="O65456">
    <property type="interactions" value="107"/>
</dbReference>
<dbReference type="STRING" id="3702.O65456"/>
<dbReference type="CAZy" id="PL1">
    <property type="family name" value="Polysaccharide Lyase Family 1"/>
</dbReference>
<dbReference type="PaxDb" id="3702-AT4G22080.1"/>
<dbReference type="ProteomicsDB" id="226280"/>
<dbReference type="EnsemblPlants" id="AT4G22080.1">
    <property type="protein sequence ID" value="AT4G22080.1"/>
    <property type="gene ID" value="AT4G22080"/>
</dbReference>
<dbReference type="GeneID" id="828297"/>
<dbReference type="Gramene" id="AT4G22080.1">
    <property type="protein sequence ID" value="AT4G22080.1"/>
    <property type="gene ID" value="AT4G22080"/>
</dbReference>
<dbReference type="KEGG" id="ath:AT4G22080"/>
<dbReference type="Araport" id="AT4G22080"/>
<dbReference type="TAIR" id="AT4G22080">
    <property type="gene designation" value="RHS14"/>
</dbReference>
<dbReference type="eggNOG" id="ENOG502QSYA">
    <property type="taxonomic scope" value="Eukaryota"/>
</dbReference>
<dbReference type="HOGENOM" id="CLU_026608_0_1_1"/>
<dbReference type="InParanoid" id="O65456"/>
<dbReference type="OMA" id="DEWRMYA"/>
<dbReference type="PhylomeDB" id="O65456"/>
<dbReference type="BioCyc" id="ARA:AT4G22080-MONOMER"/>
<dbReference type="UniPathway" id="UPA00545">
    <property type="reaction ID" value="UER00824"/>
</dbReference>
<dbReference type="PRO" id="PR:O65456"/>
<dbReference type="Proteomes" id="UP000006548">
    <property type="component" value="Chromosome 4"/>
</dbReference>
<dbReference type="ExpressionAtlas" id="O65456">
    <property type="expression patterns" value="baseline and differential"/>
</dbReference>
<dbReference type="GO" id="GO:0046872">
    <property type="term" value="F:metal ion binding"/>
    <property type="evidence" value="ECO:0007669"/>
    <property type="project" value="UniProtKB-KW"/>
</dbReference>
<dbReference type="GO" id="GO:0030570">
    <property type="term" value="F:pectate lyase activity"/>
    <property type="evidence" value="ECO:0007669"/>
    <property type="project" value="UniProtKB-EC"/>
</dbReference>
<dbReference type="GO" id="GO:0045490">
    <property type="term" value="P:pectin catabolic process"/>
    <property type="evidence" value="ECO:0007669"/>
    <property type="project" value="UniProtKB-UniPathway"/>
</dbReference>
<dbReference type="Gene3D" id="2.160.20.10">
    <property type="entry name" value="Single-stranded right-handed beta-helix, Pectin lyase-like"/>
    <property type="match status" value="1"/>
</dbReference>
<dbReference type="InterPro" id="IPR018082">
    <property type="entry name" value="AmbAllergen"/>
</dbReference>
<dbReference type="InterPro" id="IPR002022">
    <property type="entry name" value="Pec_lyase"/>
</dbReference>
<dbReference type="InterPro" id="IPR012334">
    <property type="entry name" value="Pectin_lyas_fold"/>
</dbReference>
<dbReference type="InterPro" id="IPR011050">
    <property type="entry name" value="Pectin_lyase_fold/virulence"/>
</dbReference>
<dbReference type="InterPro" id="IPR045032">
    <property type="entry name" value="PEL"/>
</dbReference>
<dbReference type="PANTHER" id="PTHR31683:SF80">
    <property type="entry name" value="PECTATE LYASE 16-RELATED"/>
    <property type="match status" value="1"/>
</dbReference>
<dbReference type="PANTHER" id="PTHR31683">
    <property type="entry name" value="PECTATE LYASE 18-RELATED"/>
    <property type="match status" value="1"/>
</dbReference>
<dbReference type="Pfam" id="PF00544">
    <property type="entry name" value="Pectate_lyase_4"/>
    <property type="match status" value="1"/>
</dbReference>
<dbReference type="PRINTS" id="PR00807">
    <property type="entry name" value="AMBALLERGEN"/>
</dbReference>
<dbReference type="SMART" id="SM00656">
    <property type="entry name" value="Amb_all"/>
    <property type="match status" value="1"/>
</dbReference>
<dbReference type="SUPFAM" id="SSF51126">
    <property type="entry name" value="Pectin lyase-like"/>
    <property type="match status" value="1"/>
</dbReference>
<reference key="1">
    <citation type="journal article" date="1999" name="Nature">
        <title>Sequence and analysis of chromosome 4 of the plant Arabidopsis thaliana.</title>
        <authorList>
            <person name="Mayer K.F.X."/>
            <person name="Schueller C."/>
            <person name="Wambutt R."/>
            <person name="Murphy G."/>
            <person name="Volckaert G."/>
            <person name="Pohl T."/>
            <person name="Duesterhoeft A."/>
            <person name="Stiekema W."/>
            <person name="Entian K.-D."/>
            <person name="Terryn N."/>
            <person name="Harris B."/>
            <person name="Ansorge W."/>
            <person name="Brandt P."/>
            <person name="Grivell L.A."/>
            <person name="Rieger M."/>
            <person name="Weichselgartner M."/>
            <person name="de Simone V."/>
            <person name="Obermaier B."/>
            <person name="Mache R."/>
            <person name="Mueller M."/>
            <person name="Kreis M."/>
            <person name="Delseny M."/>
            <person name="Puigdomenech P."/>
            <person name="Watson M."/>
            <person name="Schmidtheini T."/>
            <person name="Reichert B."/>
            <person name="Portetelle D."/>
            <person name="Perez-Alonso M."/>
            <person name="Boutry M."/>
            <person name="Bancroft I."/>
            <person name="Vos P."/>
            <person name="Hoheisel J."/>
            <person name="Zimmermann W."/>
            <person name="Wedler H."/>
            <person name="Ridley P."/>
            <person name="Langham S.-A."/>
            <person name="McCullagh B."/>
            <person name="Bilham L."/>
            <person name="Robben J."/>
            <person name="van der Schueren J."/>
            <person name="Grymonprez B."/>
            <person name="Chuang Y.-J."/>
            <person name="Vandenbussche F."/>
            <person name="Braeken M."/>
            <person name="Weltjens I."/>
            <person name="Voet M."/>
            <person name="Bastiaens I."/>
            <person name="Aert R."/>
            <person name="Defoor E."/>
            <person name="Weitzenegger T."/>
            <person name="Bothe G."/>
            <person name="Ramsperger U."/>
            <person name="Hilbert H."/>
            <person name="Braun M."/>
            <person name="Holzer E."/>
            <person name="Brandt A."/>
            <person name="Peters S."/>
            <person name="van Staveren M."/>
            <person name="Dirkse W."/>
            <person name="Mooijman P."/>
            <person name="Klein Lankhorst R."/>
            <person name="Rose M."/>
            <person name="Hauf J."/>
            <person name="Koetter P."/>
            <person name="Berneiser S."/>
            <person name="Hempel S."/>
            <person name="Feldpausch M."/>
            <person name="Lamberth S."/>
            <person name="Van den Daele H."/>
            <person name="De Keyser A."/>
            <person name="Buysshaert C."/>
            <person name="Gielen J."/>
            <person name="Villarroel R."/>
            <person name="De Clercq R."/>
            <person name="van Montagu M."/>
            <person name="Rogers J."/>
            <person name="Cronin A."/>
            <person name="Quail M.A."/>
            <person name="Bray-Allen S."/>
            <person name="Clark L."/>
            <person name="Doggett J."/>
            <person name="Hall S."/>
            <person name="Kay M."/>
            <person name="Lennard N."/>
            <person name="McLay K."/>
            <person name="Mayes R."/>
            <person name="Pettett A."/>
            <person name="Rajandream M.A."/>
            <person name="Lyne M."/>
            <person name="Benes V."/>
            <person name="Rechmann S."/>
            <person name="Borkova D."/>
            <person name="Bloecker H."/>
            <person name="Scharfe M."/>
            <person name="Grimm M."/>
            <person name="Loehnert T.-H."/>
            <person name="Dose S."/>
            <person name="de Haan M."/>
            <person name="Maarse A.C."/>
            <person name="Schaefer M."/>
            <person name="Mueller-Auer S."/>
            <person name="Gabel C."/>
            <person name="Fuchs M."/>
            <person name="Fartmann B."/>
            <person name="Granderath K."/>
            <person name="Dauner D."/>
            <person name="Herzl A."/>
            <person name="Neumann S."/>
            <person name="Argiriou A."/>
            <person name="Vitale D."/>
            <person name="Liguori R."/>
            <person name="Piravandi E."/>
            <person name="Massenet O."/>
            <person name="Quigley F."/>
            <person name="Clabauld G."/>
            <person name="Muendlein A."/>
            <person name="Felber R."/>
            <person name="Schnabl S."/>
            <person name="Hiller R."/>
            <person name="Schmidt W."/>
            <person name="Lecharny A."/>
            <person name="Aubourg S."/>
            <person name="Chefdor F."/>
            <person name="Cooke R."/>
            <person name="Berger C."/>
            <person name="Monfort A."/>
            <person name="Casacuberta E."/>
            <person name="Gibbons T."/>
            <person name="Weber N."/>
            <person name="Vandenbol M."/>
            <person name="Bargues M."/>
            <person name="Terol J."/>
            <person name="Torres A."/>
            <person name="Perez-Perez A."/>
            <person name="Purnelle B."/>
            <person name="Bent E."/>
            <person name="Johnson S."/>
            <person name="Tacon D."/>
            <person name="Jesse T."/>
            <person name="Heijnen L."/>
            <person name="Schwarz S."/>
            <person name="Scholler P."/>
            <person name="Heber S."/>
            <person name="Francs P."/>
            <person name="Bielke C."/>
            <person name="Frishman D."/>
            <person name="Haase D."/>
            <person name="Lemcke K."/>
            <person name="Mewes H.-W."/>
            <person name="Stocker S."/>
            <person name="Zaccaria P."/>
            <person name="Bevan M."/>
            <person name="Wilson R.K."/>
            <person name="de la Bastide M."/>
            <person name="Habermann K."/>
            <person name="Parnell L."/>
            <person name="Dedhia N."/>
            <person name="Gnoj L."/>
            <person name="Schutz K."/>
            <person name="Huang E."/>
            <person name="Spiegel L."/>
            <person name="Sekhon M."/>
            <person name="Murray J."/>
            <person name="Sheet P."/>
            <person name="Cordes M."/>
            <person name="Abu-Threideh J."/>
            <person name="Stoneking T."/>
            <person name="Kalicki J."/>
            <person name="Graves T."/>
            <person name="Harmon G."/>
            <person name="Edwards J."/>
            <person name="Latreille P."/>
            <person name="Courtney L."/>
            <person name="Cloud J."/>
            <person name="Abbott A."/>
            <person name="Scott K."/>
            <person name="Johnson D."/>
            <person name="Minx P."/>
            <person name="Bentley D."/>
            <person name="Fulton B."/>
            <person name="Miller N."/>
            <person name="Greco T."/>
            <person name="Kemp K."/>
            <person name="Kramer J."/>
            <person name="Fulton L."/>
            <person name="Mardis E."/>
            <person name="Dante M."/>
            <person name="Pepin K."/>
            <person name="Hillier L.W."/>
            <person name="Nelson J."/>
            <person name="Spieth J."/>
            <person name="Ryan E."/>
            <person name="Andrews S."/>
            <person name="Geisel C."/>
            <person name="Layman D."/>
            <person name="Du H."/>
            <person name="Ali J."/>
            <person name="Berghoff A."/>
            <person name="Jones K."/>
            <person name="Drone K."/>
            <person name="Cotton M."/>
            <person name="Joshu C."/>
            <person name="Antonoiu B."/>
            <person name="Zidanic M."/>
            <person name="Strong C."/>
            <person name="Sun H."/>
            <person name="Lamar B."/>
            <person name="Yordan C."/>
            <person name="Ma P."/>
            <person name="Zhong J."/>
            <person name="Preston R."/>
            <person name="Vil D."/>
            <person name="Shekher M."/>
            <person name="Matero A."/>
            <person name="Shah R."/>
            <person name="Swaby I.K."/>
            <person name="O'Shaughnessy A."/>
            <person name="Rodriguez M."/>
            <person name="Hoffman J."/>
            <person name="Till S."/>
            <person name="Granat S."/>
            <person name="Shohdy N."/>
            <person name="Hasegawa A."/>
            <person name="Hameed A."/>
            <person name="Lodhi M."/>
            <person name="Johnson A."/>
            <person name="Chen E."/>
            <person name="Marra M.A."/>
            <person name="Martienssen R."/>
            <person name="McCombie W.R."/>
        </authorList>
    </citation>
    <scope>NUCLEOTIDE SEQUENCE [LARGE SCALE GENOMIC DNA]</scope>
    <source>
        <strain>cv. Columbia</strain>
    </source>
</reference>
<reference key="2">
    <citation type="journal article" date="2017" name="Plant J.">
        <title>Araport11: a complete reannotation of the Arabidopsis thaliana reference genome.</title>
        <authorList>
            <person name="Cheng C.Y."/>
            <person name="Krishnakumar V."/>
            <person name="Chan A.P."/>
            <person name="Thibaud-Nissen F."/>
            <person name="Schobel S."/>
            <person name="Town C.D."/>
        </authorList>
    </citation>
    <scope>GENOME REANNOTATION</scope>
    <source>
        <strain>cv. Columbia</strain>
    </source>
</reference>
<reference key="3">
    <citation type="journal article" date="2004" name="Genome Res.">
        <title>Whole genome sequence comparisons and 'full-length' cDNA sequences: a combined approach to evaluate and improve Arabidopsis genome annotation.</title>
        <authorList>
            <person name="Castelli V."/>
            <person name="Aury J.-M."/>
            <person name="Jaillon O."/>
            <person name="Wincker P."/>
            <person name="Clepet C."/>
            <person name="Menard M."/>
            <person name="Cruaud C."/>
            <person name="Quetier F."/>
            <person name="Scarpelli C."/>
            <person name="Schaechter V."/>
            <person name="Temple G."/>
            <person name="Caboche M."/>
            <person name="Weissenbach J."/>
            <person name="Salanoubat M."/>
        </authorList>
    </citation>
    <scope>NUCLEOTIDE SEQUENCE [LARGE SCALE MRNA]</scope>
    <source>
        <strain>cv. Columbia</strain>
    </source>
</reference>
<keyword id="KW-0106">Calcium</keyword>
<keyword id="KW-0456">Lyase</keyword>
<keyword id="KW-0479">Metal-binding</keyword>
<keyword id="KW-1185">Reference proteome</keyword>
<keyword id="KW-0732">Signal</keyword>
<sequence length="394" mass="43476">MTLFTVSCLLVVLFLCHSLVHAENNGYYGYTPTVANYLPEKPQNIMNPVDSCWRLKSDWAANRKDLADCVVGFGSSTLGGKKGNLYVVTNPYDNAQNPQPGSLRYGVIQAKPLWITFAKDMVITLENELMVNSYKTIDGRGAKVEIAYGPCITIQDVTNVIVHGISIHDCKPGKYGMVRSSPTHVGHRKGSDGDAIAIFGSSNIWIDHCYLASCTDGLIDVIHASTGITISNNYFTQHDKVMLLGHNDDFVQDVKMKVTVAFNHFGPGLVERMPRVRRGYAHVANNRYDKWIMYAIGGSADPTIFSEGNYFIASDKSNSKEVTKREVKGGWNNWRWRTSKDVFKNGAYFVPSGYGSISLPYSSAQRFTVAPGNLVPSLTADAGPLNCNRNGPCY</sequence>
<gene>
    <name type="ordered locus">At4g22080</name>
    <name type="ORF">F1N20.180</name>
</gene>
<accession>O65456</accession>